<proteinExistence type="inferred from homology"/>
<accession>C5D9S7</accession>
<name>CHDC_GEOSW</name>
<gene>
    <name evidence="1" type="primary">chdC</name>
    <name type="ordered locus">GWCH70_3365</name>
</gene>
<keyword id="KW-0349">Heme</keyword>
<keyword id="KW-0350">Heme biosynthesis</keyword>
<keyword id="KW-0408">Iron</keyword>
<keyword id="KW-0479">Metal-binding</keyword>
<keyword id="KW-0560">Oxidoreductase</keyword>
<reference key="1">
    <citation type="submission" date="2009-06" db="EMBL/GenBank/DDBJ databases">
        <title>Complete sequence of chromosome of Geopacillus sp. WCH70.</title>
        <authorList>
            <consortium name="US DOE Joint Genome Institute"/>
            <person name="Lucas S."/>
            <person name="Copeland A."/>
            <person name="Lapidus A."/>
            <person name="Glavina del Rio T."/>
            <person name="Dalin E."/>
            <person name="Tice H."/>
            <person name="Bruce D."/>
            <person name="Goodwin L."/>
            <person name="Pitluck S."/>
            <person name="Chertkov O."/>
            <person name="Brettin T."/>
            <person name="Detter J.C."/>
            <person name="Han C."/>
            <person name="Larimer F."/>
            <person name="Land M."/>
            <person name="Hauser L."/>
            <person name="Kyrpides N."/>
            <person name="Mikhailova N."/>
            <person name="Brumm P."/>
            <person name="Mead D.A."/>
            <person name="Richardson P."/>
        </authorList>
    </citation>
    <scope>NUCLEOTIDE SEQUENCE [LARGE SCALE GENOMIC DNA]</scope>
    <source>
        <strain>WCH70</strain>
    </source>
</reference>
<feature type="chain" id="PRO_1000215289" description="Coproheme decarboxylase">
    <location>
        <begin position="1"/>
        <end position="248"/>
    </location>
</feature>
<feature type="active site" evidence="1">
    <location>
        <position position="144"/>
    </location>
</feature>
<feature type="binding site" evidence="1">
    <location>
        <position position="130"/>
    </location>
    <ligand>
        <name>Fe-coproporphyrin III</name>
        <dbReference type="ChEBI" id="CHEBI:68438"/>
    </ligand>
</feature>
<feature type="binding site" evidence="1">
    <location>
        <begin position="144"/>
        <end position="148"/>
    </location>
    <ligand>
        <name>Fe-coproporphyrin III</name>
        <dbReference type="ChEBI" id="CHEBI:68438"/>
    </ligand>
</feature>
<feature type="binding site" description="axial binding residue" evidence="1">
    <location>
        <position position="171"/>
    </location>
    <ligand>
        <name>Fe-coproporphyrin III</name>
        <dbReference type="ChEBI" id="CHEBI:68438"/>
    </ligand>
    <ligandPart>
        <name>Fe</name>
        <dbReference type="ChEBI" id="CHEBI:18248"/>
    </ligandPart>
</feature>
<feature type="binding site" evidence="1">
    <location>
        <position position="184"/>
    </location>
    <ligand>
        <name>Fe-coproporphyrin III</name>
        <dbReference type="ChEBI" id="CHEBI:68438"/>
    </ligand>
</feature>
<feature type="binding site" evidence="1">
    <location>
        <position position="222"/>
    </location>
    <ligand>
        <name>Fe-coproporphyrin III</name>
        <dbReference type="ChEBI" id="CHEBI:68438"/>
    </ligand>
</feature>
<evidence type="ECO:0000255" key="1">
    <source>
        <dbReference type="HAMAP-Rule" id="MF_01442"/>
    </source>
</evidence>
<comment type="function">
    <text evidence="1">Involved in coproporphyrin-dependent heme b biosynthesis. Catalyzes the decarboxylation of Fe-coproporphyrin III (coproheme) to heme b (protoheme IX), the last step of the pathway. The reaction occurs in a stepwise manner with a three-propionate intermediate.</text>
</comment>
<comment type="catalytic activity">
    <reaction evidence="1">
        <text>Fe-coproporphyrin III + 2 H2O2 + 2 H(+) = heme b + 2 CO2 + 4 H2O</text>
        <dbReference type="Rhea" id="RHEA:56516"/>
        <dbReference type="ChEBI" id="CHEBI:15377"/>
        <dbReference type="ChEBI" id="CHEBI:15378"/>
        <dbReference type="ChEBI" id="CHEBI:16240"/>
        <dbReference type="ChEBI" id="CHEBI:16526"/>
        <dbReference type="ChEBI" id="CHEBI:60344"/>
        <dbReference type="ChEBI" id="CHEBI:68438"/>
        <dbReference type="EC" id="1.3.98.5"/>
    </reaction>
    <physiologicalReaction direction="left-to-right" evidence="1">
        <dbReference type="Rhea" id="RHEA:56517"/>
    </physiologicalReaction>
</comment>
<comment type="catalytic activity">
    <reaction evidence="1">
        <text>Fe-coproporphyrin III + H2O2 + H(+) = harderoheme III + CO2 + 2 H2O</text>
        <dbReference type="Rhea" id="RHEA:57940"/>
        <dbReference type="ChEBI" id="CHEBI:15377"/>
        <dbReference type="ChEBI" id="CHEBI:15378"/>
        <dbReference type="ChEBI" id="CHEBI:16240"/>
        <dbReference type="ChEBI" id="CHEBI:16526"/>
        <dbReference type="ChEBI" id="CHEBI:68438"/>
        <dbReference type="ChEBI" id="CHEBI:142463"/>
    </reaction>
    <physiologicalReaction direction="left-to-right" evidence="1">
        <dbReference type="Rhea" id="RHEA:57941"/>
    </physiologicalReaction>
</comment>
<comment type="catalytic activity">
    <reaction evidence="1">
        <text>harderoheme III + H2O2 + H(+) = heme b + CO2 + 2 H2O</text>
        <dbReference type="Rhea" id="RHEA:57944"/>
        <dbReference type="ChEBI" id="CHEBI:15377"/>
        <dbReference type="ChEBI" id="CHEBI:15378"/>
        <dbReference type="ChEBI" id="CHEBI:16240"/>
        <dbReference type="ChEBI" id="CHEBI:16526"/>
        <dbReference type="ChEBI" id="CHEBI:60344"/>
        <dbReference type="ChEBI" id="CHEBI:142463"/>
    </reaction>
    <physiologicalReaction direction="left-to-right" evidence="1">
        <dbReference type="Rhea" id="RHEA:57945"/>
    </physiologicalReaction>
</comment>
<comment type="cofactor">
    <cofactor evidence="1">
        <name>Fe-coproporphyrin III</name>
        <dbReference type="ChEBI" id="CHEBI:68438"/>
    </cofactor>
    <text evidence="1">Fe-coproporphyrin III acts both as a substrate and a redox cofactor.</text>
</comment>
<comment type="pathway">
    <text evidence="1">Porphyrin-containing compound metabolism; protoheme biosynthesis.</text>
</comment>
<comment type="similarity">
    <text evidence="1">Belongs to the ChdC family. Type 1 subfamily.</text>
</comment>
<protein>
    <recommendedName>
        <fullName evidence="1">Coproheme decarboxylase</fullName>
        <ecNumber evidence="1">1.3.98.5</ecNumber>
    </recommendedName>
    <alternativeName>
        <fullName evidence="1">Coproheme III oxidative decarboxylase</fullName>
    </alternativeName>
    <alternativeName>
        <fullName evidence="1">Hydrogen peroxide-dependent heme synthase</fullName>
    </alternativeName>
</protein>
<dbReference type="EC" id="1.3.98.5" evidence="1"/>
<dbReference type="EMBL" id="CP001638">
    <property type="protein sequence ID" value="ACS26005.1"/>
    <property type="molecule type" value="Genomic_DNA"/>
</dbReference>
<dbReference type="SMR" id="C5D9S7"/>
<dbReference type="STRING" id="471223.GWCH70_3365"/>
<dbReference type="KEGG" id="gwc:GWCH70_3365"/>
<dbReference type="eggNOG" id="COG3253">
    <property type="taxonomic scope" value="Bacteria"/>
</dbReference>
<dbReference type="HOGENOM" id="CLU_063226_1_0_9"/>
<dbReference type="OrthoDB" id="9773646at2"/>
<dbReference type="UniPathway" id="UPA00252"/>
<dbReference type="GO" id="GO:0020037">
    <property type="term" value="F:heme binding"/>
    <property type="evidence" value="ECO:0007669"/>
    <property type="project" value="InterPro"/>
</dbReference>
<dbReference type="GO" id="GO:0046872">
    <property type="term" value="F:metal ion binding"/>
    <property type="evidence" value="ECO:0007669"/>
    <property type="project" value="UniProtKB-KW"/>
</dbReference>
<dbReference type="GO" id="GO:0016634">
    <property type="term" value="F:oxidoreductase activity, acting on the CH-CH group of donors, oxygen as acceptor"/>
    <property type="evidence" value="ECO:0007669"/>
    <property type="project" value="UniProtKB-UniRule"/>
</dbReference>
<dbReference type="GO" id="GO:0004601">
    <property type="term" value="F:peroxidase activity"/>
    <property type="evidence" value="ECO:0007669"/>
    <property type="project" value="InterPro"/>
</dbReference>
<dbReference type="GO" id="GO:0006785">
    <property type="term" value="P:heme B biosynthetic process"/>
    <property type="evidence" value="ECO:0007669"/>
    <property type="project" value="UniProtKB-UniRule"/>
</dbReference>
<dbReference type="Gene3D" id="3.30.70.1030">
    <property type="entry name" value="Apc35880, domain 1"/>
    <property type="match status" value="2"/>
</dbReference>
<dbReference type="HAMAP" id="MF_01442">
    <property type="entry name" value="Coproheme_decarbox_1"/>
    <property type="match status" value="1"/>
</dbReference>
<dbReference type="InterPro" id="IPR031332">
    <property type="entry name" value="CHDC"/>
</dbReference>
<dbReference type="InterPro" id="IPR010644">
    <property type="entry name" value="ChdC/CLD"/>
</dbReference>
<dbReference type="InterPro" id="IPR011008">
    <property type="entry name" value="Dimeric_a/b-barrel"/>
</dbReference>
<dbReference type="NCBIfam" id="NF008913">
    <property type="entry name" value="PRK12276.1"/>
    <property type="match status" value="1"/>
</dbReference>
<dbReference type="PANTHER" id="PTHR36843:SF1">
    <property type="entry name" value="COPROHEME DECARBOXYLASE"/>
    <property type="match status" value="1"/>
</dbReference>
<dbReference type="PANTHER" id="PTHR36843">
    <property type="entry name" value="HEME-DEPENDENT PEROXIDASE YWFI-RELATED"/>
    <property type="match status" value="1"/>
</dbReference>
<dbReference type="Pfam" id="PF06778">
    <property type="entry name" value="Chlor_dismutase"/>
    <property type="match status" value="1"/>
</dbReference>
<dbReference type="SUPFAM" id="SSF54909">
    <property type="entry name" value="Dimeric alpha+beta barrel"/>
    <property type="match status" value="1"/>
</dbReference>
<organism>
    <name type="scientific">Geobacillus sp. (strain WCH70)</name>
    <dbReference type="NCBI Taxonomy" id="471223"/>
    <lineage>
        <taxon>Bacteria</taxon>
        <taxon>Bacillati</taxon>
        <taxon>Bacillota</taxon>
        <taxon>Bacilli</taxon>
        <taxon>Bacillales</taxon>
        <taxon>Anoxybacillaceae</taxon>
        <taxon>Geobacillus</taxon>
    </lineage>
</organism>
<sequence length="248" mass="28870">MSEAAQTLDGWYCLHDFRSIDWSAWKTLTSDEREAAIREFLSLVEKWQETEDKQEGSHAIYTIVGQKADIMFMILRPTIEELNEIETALNKTKLAEFLVPAYSYVSVVELSNYLASGDEDPYQIPEVRRRLYPILPKTKHVCFYPMDKRRQGNDNWYMLSMEERRNLMRAHGLTGRKYAGKVTQIITGSVGLDDFEWGVTLFSDDALQFKKLVYEMRFDEVSARYGEFGSFFVGNRLTVEKVPVFLHV</sequence>